<gene>
    <name type="primary">rpsS</name>
</gene>
<dbReference type="EMBL" id="U11251">
    <property type="protein sequence ID" value="AAC43514.1"/>
    <property type="molecule type" value="Genomic_DNA"/>
</dbReference>
<dbReference type="SMR" id="Q56847"/>
<dbReference type="GO" id="GO:1990904">
    <property type="term" value="C:ribonucleoprotein complex"/>
    <property type="evidence" value="ECO:0007669"/>
    <property type="project" value="UniProtKB-KW"/>
</dbReference>
<dbReference type="GO" id="GO:0005840">
    <property type="term" value="C:ribosome"/>
    <property type="evidence" value="ECO:0007669"/>
    <property type="project" value="UniProtKB-KW"/>
</dbReference>
<dbReference type="GO" id="GO:0019843">
    <property type="term" value="F:rRNA binding"/>
    <property type="evidence" value="ECO:0007669"/>
    <property type="project" value="UniProtKB-KW"/>
</dbReference>
<dbReference type="GO" id="GO:0003735">
    <property type="term" value="F:structural constituent of ribosome"/>
    <property type="evidence" value="ECO:0007669"/>
    <property type="project" value="InterPro"/>
</dbReference>
<dbReference type="GO" id="GO:0006412">
    <property type="term" value="P:translation"/>
    <property type="evidence" value="ECO:0007669"/>
    <property type="project" value="InterPro"/>
</dbReference>
<dbReference type="Gene3D" id="3.30.860.10">
    <property type="entry name" value="30s Ribosomal Protein S19, Chain A"/>
    <property type="match status" value="1"/>
</dbReference>
<dbReference type="InterPro" id="IPR023575">
    <property type="entry name" value="Ribosomal_uS19_SF"/>
</dbReference>
<dbReference type="SUPFAM" id="SSF54570">
    <property type="entry name" value="Ribosomal protein S19"/>
    <property type="match status" value="1"/>
</dbReference>
<comment type="function">
    <text evidence="1">Protein S19 forms a complex with S13 that binds strongly to the 16S ribosomal RNA.</text>
</comment>
<comment type="similarity">
    <text evidence="2">Belongs to the universal ribosomal protein uS19 family.</text>
</comment>
<feature type="chain" id="PRO_0000129946" description="Small ribosomal subunit protein uS19">
    <location>
        <begin position="1"/>
        <end position="32" status="greater than"/>
    </location>
</feature>
<feature type="non-terminal residue">
    <location>
        <position position="32"/>
    </location>
</feature>
<accession>Q56847</accession>
<reference key="1">
    <citation type="journal article" date="1994" name="Mol. Med.">
        <title>The evolutionarily conserved ribosomal protein L23 and the cationic urease beta-subunit of Yersinia enterocolitica O:3 belong to the immunodominant antigens in Yersinia-triggered reactive arthritis: implications for autoimmunity.</title>
        <authorList>
            <person name="Mertz A.K.H."/>
            <person name="Daser A."/>
            <person name="Skurnik M."/>
            <person name="Wiesmueller K.-H."/>
            <person name="Braun J."/>
            <person name="Appel H."/>
            <person name="Batsford S."/>
            <person name="Wu P."/>
            <person name="Distler A."/>
            <person name="Sieper J."/>
        </authorList>
    </citation>
    <scope>NUCLEOTIDE SEQUENCE [GENOMIC DNA]</scope>
    <source>
        <strain>6471/76 / Serotype O:3</strain>
    </source>
</reference>
<sequence length="32" mass="3659">MPRSLKKGPFIDLHLLKKVEKAVESGDKKPIR</sequence>
<evidence type="ECO:0000250" key="1"/>
<evidence type="ECO:0000305" key="2"/>
<protein>
    <recommendedName>
        <fullName evidence="2">Small ribosomal subunit protein uS19</fullName>
    </recommendedName>
    <alternativeName>
        <fullName>30S ribosomal protein S19</fullName>
    </alternativeName>
</protein>
<keyword id="KW-0687">Ribonucleoprotein</keyword>
<keyword id="KW-0689">Ribosomal protein</keyword>
<keyword id="KW-0694">RNA-binding</keyword>
<keyword id="KW-0699">rRNA-binding</keyword>
<organism>
    <name type="scientific">Yersinia enterocolitica</name>
    <dbReference type="NCBI Taxonomy" id="630"/>
    <lineage>
        <taxon>Bacteria</taxon>
        <taxon>Pseudomonadati</taxon>
        <taxon>Pseudomonadota</taxon>
        <taxon>Gammaproteobacteria</taxon>
        <taxon>Enterobacterales</taxon>
        <taxon>Yersiniaceae</taxon>
        <taxon>Yersinia</taxon>
    </lineage>
</organism>
<name>RS19_YEREN</name>
<proteinExistence type="inferred from homology"/>